<dbReference type="EC" id="3.6.1.-" evidence="1"/>
<dbReference type="EMBL" id="CP000305">
    <property type="protein sequence ID" value="ABG17680.1"/>
    <property type="status" value="ALT_INIT"/>
    <property type="molecule type" value="Genomic_DNA"/>
</dbReference>
<dbReference type="EMBL" id="ACNQ01000008">
    <property type="protein sequence ID" value="EEO77801.1"/>
    <property type="molecule type" value="Genomic_DNA"/>
</dbReference>
<dbReference type="RefSeq" id="WP_002208529.1">
    <property type="nucleotide sequence ID" value="NZ_ACNQ01000008.1"/>
</dbReference>
<dbReference type="SMR" id="Q1CK00"/>
<dbReference type="GeneID" id="57975667"/>
<dbReference type="KEGG" id="ypn:YPN_1350"/>
<dbReference type="HOGENOM" id="CLU_062658_6_0_6"/>
<dbReference type="Proteomes" id="UP000008936">
    <property type="component" value="Chromosome"/>
</dbReference>
<dbReference type="GO" id="GO:0005829">
    <property type="term" value="C:cytosol"/>
    <property type="evidence" value="ECO:0007669"/>
    <property type="project" value="TreeGrafter"/>
</dbReference>
<dbReference type="GO" id="GO:0016818">
    <property type="term" value="F:hydrolase activity, acting on acid anhydrides, in phosphorus-containing anhydrides"/>
    <property type="evidence" value="ECO:0007669"/>
    <property type="project" value="InterPro"/>
</dbReference>
<dbReference type="GO" id="GO:0046872">
    <property type="term" value="F:metal ion binding"/>
    <property type="evidence" value="ECO:0007669"/>
    <property type="project" value="UniProtKB-KW"/>
</dbReference>
<dbReference type="GO" id="GO:0006753">
    <property type="term" value="P:nucleoside phosphate metabolic process"/>
    <property type="evidence" value="ECO:0007669"/>
    <property type="project" value="TreeGrafter"/>
</dbReference>
<dbReference type="GO" id="GO:0019693">
    <property type="term" value="P:ribose phosphate metabolic process"/>
    <property type="evidence" value="ECO:0007669"/>
    <property type="project" value="TreeGrafter"/>
</dbReference>
<dbReference type="CDD" id="cd24157">
    <property type="entry name" value="NUDIX_GDPMK"/>
    <property type="match status" value="1"/>
</dbReference>
<dbReference type="FunFam" id="3.90.79.10:FF:000010">
    <property type="entry name" value="GDP-mannose pyrophosphatase NudK"/>
    <property type="match status" value="1"/>
</dbReference>
<dbReference type="Gene3D" id="3.90.79.10">
    <property type="entry name" value="Nucleoside Triphosphate Pyrophosphohydrolase"/>
    <property type="match status" value="1"/>
</dbReference>
<dbReference type="InterPro" id="IPR004385">
    <property type="entry name" value="NDP_pyrophosphatase"/>
</dbReference>
<dbReference type="InterPro" id="IPR015797">
    <property type="entry name" value="NUDIX_hydrolase-like_dom_sf"/>
</dbReference>
<dbReference type="InterPro" id="IPR000086">
    <property type="entry name" value="NUDIX_hydrolase_dom"/>
</dbReference>
<dbReference type="NCBIfam" id="TIGR00052">
    <property type="entry name" value="nudix-type nucleoside diphosphatase, YffH/AdpP family"/>
    <property type="match status" value="1"/>
</dbReference>
<dbReference type="NCBIfam" id="NF011585">
    <property type="entry name" value="PRK15009.1"/>
    <property type="match status" value="1"/>
</dbReference>
<dbReference type="PANTHER" id="PTHR11839:SF18">
    <property type="entry name" value="NUDIX HYDROLASE DOMAIN-CONTAINING PROTEIN"/>
    <property type="match status" value="1"/>
</dbReference>
<dbReference type="PANTHER" id="PTHR11839">
    <property type="entry name" value="UDP/ADP-SUGAR PYROPHOSPHATASE"/>
    <property type="match status" value="1"/>
</dbReference>
<dbReference type="Pfam" id="PF00293">
    <property type="entry name" value="NUDIX"/>
    <property type="match status" value="1"/>
</dbReference>
<dbReference type="SUPFAM" id="SSF55811">
    <property type="entry name" value="Nudix"/>
    <property type="match status" value="1"/>
</dbReference>
<dbReference type="PROSITE" id="PS51462">
    <property type="entry name" value="NUDIX"/>
    <property type="match status" value="1"/>
</dbReference>
<sequence length="198" mass="22472">MSVKIENIQCELLSKNWFKLHKYTFDLKTDEGTSVQQIREVYDRGNGATILLYNRQQGTVVLIEQFRMPTYVNGNASGMLLEACAGLLDNDSPEACIRREAMEETGYQVDKVQKLFEAYMSPGGVTELVYFFAAEYHPDQKITDEVGVEDEVIEVVELPFHDALAMVADGRIKDGKTIMLLQYAQIHFFPSSLTPQRC</sequence>
<organism>
    <name type="scientific">Yersinia pestis bv. Antiqua (strain Nepal516)</name>
    <dbReference type="NCBI Taxonomy" id="377628"/>
    <lineage>
        <taxon>Bacteria</taxon>
        <taxon>Pseudomonadati</taxon>
        <taxon>Pseudomonadota</taxon>
        <taxon>Gammaproteobacteria</taxon>
        <taxon>Enterobacterales</taxon>
        <taxon>Yersiniaceae</taxon>
        <taxon>Yersinia</taxon>
    </lineage>
</organism>
<name>NUDK_YERPN</name>
<protein>
    <recommendedName>
        <fullName>GDP-mannose pyrophosphatase</fullName>
        <ecNumber evidence="1">3.6.1.-</ecNumber>
    </recommendedName>
    <alternativeName>
        <fullName>GDP-mannose hydrolase</fullName>
    </alternativeName>
    <alternativeName>
        <fullName>GDPMK</fullName>
    </alternativeName>
</protein>
<feature type="chain" id="PRO_0000342508" description="GDP-mannose pyrophosphatase">
    <location>
        <begin position="1"/>
        <end position="198"/>
    </location>
</feature>
<feature type="domain" description="Nudix hydrolase" evidence="2">
    <location>
        <begin position="43"/>
        <end position="180"/>
    </location>
</feature>
<feature type="short sequence motif" description="Nudix box">
    <location>
        <begin position="86"/>
        <end position="106"/>
    </location>
</feature>
<feature type="binding site" evidence="1">
    <location>
        <begin position="38"/>
        <end position="40"/>
    </location>
    <ligand>
        <name>GDP-alpha-D-mannose</name>
        <dbReference type="ChEBI" id="CHEBI:57527"/>
        <note>ligand shared between dimeric partners</note>
    </ligand>
</feature>
<feature type="binding site" description="in other chain" evidence="1">
    <location>
        <position position="67"/>
    </location>
    <ligand>
        <name>GDP-alpha-D-mannose</name>
        <dbReference type="ChEBI" id="CHEBI:57527"/>
        <note>ligand shared between dimeric partners</note>
    </ligand>
</feature>
<feature type="binding site" description="in other chain" evidence="1">
    <location>
        <begin position="85"/>
        <end position="87"/>
    </location>
    <ligand>
        <name>GDP-alpha-D-mannose</name>
        <dbReference type="ChEBI" id="CHEBI:57527"/>
        <note>ligand shared between dimeric partners</note>
    </ligand>
</feature>
<feature type="binding site" evidence="1">
    <location>
        <position position="85"/>
    </location>
    <ligand>
        <name>Mg(2+)</name>
        <dbReference type="ChEBI" id="CHEBI:18420"/>
        <label>1</label>
    </ligand>
</feature>
<feature type="binding site" evidence="1">
    <location>
        <position position="100"/>
    </location>
    <ligand>
        <name>Mg(2+)</name>
        <dbReference type="ChEBI" id="CHEBI:18420"/>
        <label>2</label>
    </ligand>
</feature>
<feature type="binding site" description="in other chain" evidence="1">
    <location>
        <position position="104"/>
    </location>
    <ligand>
        <name>GDP-alpha-D-mannose</name>
        <dbReference type="ChEBI" id="CHEBI:57527"/>
        <note>ligand shared between dimeric partners</note>
    </ligand>
</feature>
<feature type="binding site" evidence="1">
    <location>
        <position position="104"/>
    </location>
    <ligand>
        <name>Mg(2+)</name>
        <dbReference type="ChEBI" id="CHEBI:18420"/>
        <label>1</label>
    </ligand>
</feature>
<feature type="binding site" evidence="1">
    <location>
        <position position="104"/>
    </location>
    <ligand>
        <name>Mg(2+)</name>
        <dbReference type="ChEBI" id="CHEBI:18420"/>
        <label>2</label>
    </ligand>
</feature>
<feature type="binding site" description="in other chain" evidence="1">
    <location>
        <position position="127"/>
    </location>
    <ligand>
        <name>GDP-alpha-D-mannose</name>
        <dbReference type="ChEBI" id="CHEBI:57527"/>
        <note>ligand shared between dimeric partners</note>
    </ligand>
</feature>
<feature type="binding site" description="in other chain" evidence="1">
    <location>
        <begin position="150"/>
        <end position="151"/>
    </location>
    <ligand>
        <name>GDP-alpha-D-mannose</name>
        <dbReference type="ChEBI" id="CHEBI:57527"/>
        <note>ligand shared between dimeric partners</note>
    </ligand>
</feature>
<feature type="binding site" evidence="1">
    <location>
        <position position="151"/>
    </location>
    <ligand>
        <name>Mg(2+)</name>
        <dbReference type="ChEBI" id="CHEBI:18420"/>
        <label>2</label>
    </ligand>
</feature>
<feature type="binding site" description="in other chain" evidence="1">
    <location>
        <position position="176"/>
    </location>
    <ligand>
        <name>GDP-alpha-D-mannose</name>
        <dbReference type="ChEBI" id="CHEBI:57527"/>
        <note>ligand shared between dimeric partners</note>
    </ligand>
</feature>
<gene>
    <name type="primary">nudK</name>
    <name type="ordered locus">YPN_1350</name>
    <name type="ORF">YP516_1488</name>
</gene>
<comment type="function">
    <text evidence="1">Nucleoside diphosphate sugar hydrolase that hydrolyzes GDP-mannose as its preferred substrate, yielding GMP and mannose-1-phosphate.</text>
</comment>
<comment type="catalytic activity">
    <reaction evidence="1">
        <text>GDP-alpha-D-mannose + H2O = alpha-D-mannose 1-phosphate + GMP + 2 H(+)</text>
        <dbReference type="Rhea" id="RHEA:27978"/>
        <dbReference type="ChEBI" id="CHEBI:15377"/>
        <dbReference type="ChEBI" id="CHEBI:15378"/>
        <dbReference type="ChEBI" id="CHEBI:57527"/>
        <dbReference type="ChEBI" id="CHEBI:58115"/>
        <dbReference type="ChEBI" id="CHEBI:58409"/>
    </reaction>
</comment>
<comment type="cofactor">
    <cofactor evidence="1">
        <name>Mg(2+)</name>
        <dbReference type="ChEBI" id="CHEBI:18420"/>
    </cofactor>
</comment>
<comment type="subunit">
    <text evidence="1">Homodimer.</text>
</comment>
<comment type="domain">
    <text evidence="1">In the dimer, the N-terminal domains are swapped between the two monomers, such that residues of both chains contribute to the active site.</text>
</comment>
<comment type="similarity">
    <text evidence="3">Belongs to the Nudix hydrolase family. NudK subfamily.</text>
</comment>
<comment type="sequence caution" evidence="3">
    <conflict type="erroneous initiation">
        <sequence resource="EMBL-CDS" id="ABG17680"/>
    </conflict>
</comment>
<accession>Q1CK00</accession>
<accession>C4GRW0</accession>
<proteinExistence type="inferred from homology"/>
<evidence type="ECO:0000250" key="1">
    <source>
        <dbReference type="UniProtKB" id="P37128"/>
    </source>
</evidence>
<evidence type="ECO:0000255" key="2">
    <source>
        <dbReference type="PROSITE-ProRule" id="PRU00794"/>
    </source>
</evidence>
<evidence type="ECO:0000305" key="3"/>
<keyword id="KW-0378">Hydrolase</keyword>
<keyword id="KW-0460">Magnesium</keyword>
<keyword id="KW-0479">Metal-binding</keyword>
<reference key="1">
    <citation type="journal article" date="2006" name="J. Bacteriol.">
        <title>Complete genome sequence of Yersinia pestis strains Antiqua and Nepal516: evidence of gene reduction in an emerging pathogen.</title>
        <authorList>
            <person name="Chain P.S.G."/>
            <person name="Hu P."/>
            <person name="Malfatti S.A."/>
            <person name="Radnedge L."/>
            <person name="Larimer F."/>
            <person name="Vergez L.M."/>
            <person name="Worsham P."/>
            <person name="Chu M.C."/>
            <person name="Andersen G.L."/>
        </authorList>
    </citation>
    <scope>NUCLEOTIDE SEQUENCE [LARGE SCALE GENOMIC DNA]</scope>
    <source>
        <strain>Nepal516</strain>
    </source>
</reference>
<reference key="2">
    <citation type="submission" date="2009-04" db="EMBL/GenBank/DDBJ databases">
        <title>Yersinia pestis Nepal516A whole genome shotgun sequencing project.</title>
        <authorList>
            <person name="Plunkett G. III"/>
            <person name="Anderson B.D."/>
            <person name="Baumler D.J."/>
            <person name="Burland V."/>
            <person name="Cabot E.L."/>
            <person name="Glasner J.D."/>
            <person name="Mau B."/>
            <person name="Neeno-Eckwall E."/>
            <person name="Perna N.T."/>
            <person name="Munk A.C."/>
            <person name="Tapia R."/>
            <person name="Green L.D."/>
            <person name="Rogers Y.C."/>
            <person name="Detter J.C."/>
            <person name="Bruce D.C."/>
            <person name="Brettin T.S."/>
        </authorList>
    </citation>
    <scope>NUCLEOTIDE SEQUENCE [LARGE SCALE GENOMIC DNA]</scope>
    <source>
        <strain>Nepal516</strain>
    </source>
</reference>